<feature type="signal peptide" evidence="4">
    <location>
        <begin position="1"/>
        <end position="25"/>
    </location>
</feature>
<feature type="propeptide" id="PRO_0000008065" evidence="3">
    <location>
        <begin position="26"/>
        <end position="50"/>
    </location>
</feature>
<feature type="peptide" id="PRO_0000008066" description="Big endothelin-1" evidence="7 8">
    <location>
        <begin position="53"/>
        <end position="82"/>
    </location>
</feature>
<feature type="peptide" id="PRO_0000008067" description="Endothelin-1" evidence="6">
    <location>
        <begin position="53"/>
        <end position="73"/>
    </location>
</feature>
<feature type="propeptide" id="PRO_0000008068">
    <location>
        <begin position="83"/>
        <end position="203"/>
    </location>
</feature>
<feature type="region of interest" description="Disordered" evidence="5">
    <location>
        <begin position="27"/>
        <end position="48"/>
    </location>
</feature>
<feature type="region of interest" description="Endothelin-like">
    <location>
        <begin position="110"/>
        <end position="124"/>
    </location>
</feature>
<feature type="site" description="Cleavage; by KEL" evidence="1">
    <location>
        <begin position="73"/>
        <end position="74"/>
    </location>
</feature>
<feature type="glycosylation site" description="N-linked (GlcNAc...) asparagine" evidence="4">
    <location>
        <position position="200"/>
    </location>
</feature>
<feature type="disulfide bond" evidence="6">
    <location>
        <begin position="53"/>
        <end position="67"/>
    </location>
</feature>
<feature type="disulfide bond" evidence="6">
    <location>
        <begin position="55"/>
        <end position="63"/>
    </location>
</feature>
<name>EDN1_PIG</name>
<dbReference type="EMBL" id="X07383">
    <property type="protein sequence ID" value="CAA30296.1"/>
    <property type="molecule type" value="mRNA"/>
</dbReference>
<dbReference type="PIR" id="S03159">
    <property type="entry name" value="ANPG"/>
</dbReference>
<dbReference type="RefSeq" id="NP_999047.1">
    <property type="nucleotide sequence ID" value="NM_213882.1"/>
</dbReference>
<dbReference type="BMRB" id="P09558"/>
<dbReference type="FunCoup" id="P09558">
    <property type="interactions" value="121"/>
</dbReference>
<dbReference type="STRING" id="9823.ENSSSCP00000043269"/>
<dbReference type="GlyCosmos" id="P09558">
    <property type="glycosylation" value="1 site, No reported glycans"/>
</dbReference>
<dbReference type="GlyGen" id="P09558">
    <property type="glycosylation" value="1 site"/>
</dbReference>
<dbReference type="PaxDb" id="9823-ENSSSCP00000001121"/>
<dbReference type="Ensembl" id="ENSSSCT00065037539.1">
    <property type="protein sequence ID" value="ENSSSCP00065015808.1"/>
    <property type="gene ID" value="ENSSSCG00065027852.1"/>
</dbReference>
<dbReference type="Ensembl" id="ENSSSCT00085049969">
    <property type="protein sequence ID" value="ENSSSCP00085034943"/>
    <property type="gene ID" value="ENSSSCG00085026027"/>
</dbReference>
<dbReference type="Ensembl" id="ENSSSCT00090006096">
    <property type="protein sequence ID" value="ENSSSCP00090003898"/>
    <property type="gene ID" value="ENSSSCG00090003456"/>
</dbReference>
<dbReference type="GeneID" id="396915"/>
<dbReference type="KEGG" id="ssc:396915"/>
<dbReference type="CTD" id="1906"/>
<dbReference type="eggNOG" id="ENOG502S1NV">
    <property type="taxonomic scope" value="Eukaryota"/>
</dbReference>
<dbReference type="InParanoid" id="P09558"/>
<dbReference type="OrthoDB" id="8873756at2759"/>
<dbReference type="Proteomes" id="UP000008227">
    <property type="component" value="Unplaced"/>
</dbReference>
<dbReference type="Proteomes" id="UP000314985">
    <property type="component" value="Unplaced"/>
</dbReference>
<dbReference type="Proteomes" id="UP000694570">
    <property type="component" value="Unplaced"/>
</dbReference>
<dbReference type="Proteomes" id="UP000694571">
    <property type="component" value="Unplaced"/>
</dbReference>
<dbReference type="Proteomes" id="UP000694720">
    <property type="component" value="Unplaced"/>
</dbReference>
<dbReference type="Proteomes" id="UP000694722">
    <property type="component" value="Unplaced"/>
</dbReference>
<dbReference type="Proteomes" id="UP000694723">
    <property type="component" value="Unplaced"/>
</dbReference>
<dbReference type="Proteomes" id="UP000694724">
    <property type="component" value="Unplaced"/>
</dbReference>
<dbReference type="Proteomes" id="UP000694725">
    <property type="component" value="Unplaced"/>
</dbReference>
<dbReference type="Proteomes" id="UP000694726">
    <property type="component" value="Unplaced"/>
</dbReference>
<dbReference type="Proteomes" id="UP000694727">
    <property type="component" value="Unplaced"/>
</dbReference>
<dbReference type="Proteomes" id="UP000694728">
    <property type="component" value="Unplaced"/>
</dbReference>
<dbReference type="GO" id="GO:0005615">
    <property type="term" value="C:extracellular space"/>
    <property type="evidence" value="ECO:0000318"/>
    <property type="project" value="GO_Central"/>
</dbReference>
<dbReference type="GO" id="GO:0031707">
    <property type="term" value="F:endothelin A receptor binding"/>
    <property type="evidence" value="ECO:0000318"/>
    <property type="project" value="GO_Central"/>
</dbReference>
<dbReference type="GO" id="GO:0031708">
    <property type="term" value="F:endothelin B receptor binding"/>
    <property type="evidence" value="ECO:0000318"/>
    <property type="project" value="GO_Central"/>
</dbReference>
<dbReference type="GO" id="GO:0005179">
    <property type="term" value="F:hormone activity"/>
    <property type="evidence" value="ECO:0000318"/>
    <property type="project" value="GO_Central"/>
</dbReference>
<dbReference type="GO" id="GO:0086100">
    <property type="term" value="P:endothelin receptor signaling pathway"/>
    <property type="evidence" value="ECO:0000250"/>
    <property type="project" value="UniProtKB"/>
</dbReference>
<dbReference type="GO" id="GO:0006874">
    <property type="term" value="P:intracellular calcium ion homeostasis"/>
    <property type="evidence" value="ECO:0000318"/>
    <property type="project" value="GO_Central"/>
</dbReference>
<dbReference type="GO" id="GO:1900182">
    <property type="term" value="P:positive regulation of protein localization to nucleus"/>
    <property type="evidence" value="ECO:0000250"/>
    <property type="project" value="UniProtKB"/>
</dbReference>
<dbReference type="GO" id="GO:0045987">
    <property type="term" value="P:positive regulation of smooth muscle contraction"/>
    <property type="evidence" value="ECO:0000318"/>
    <property type="project" value="GO_Central"/>
</dbReference>
<dbReference type="GO" id="GO:0003100">
    <property type="term" value="P:regulation of systemic arterial blood pressure by endothelin"/>
    <property type="evidence" value="ECO:0000318"/>
    <property type="project" value="GO_Central"/>
</dbReference>
<dbReference type="GO" id="GO:0019229">
    <property type="term" value="P:regulation of vasoconstriction"/>
    <property type="evidence" value="ECO:0007669"/>
    <property type="project" value="InterPro"/>
</dbReference>
<dbReference type="GO" id="GO:0014826">
    <property type="term" value="P:vein smooth muscle contraction"/>
    <property type="evidence" value="ECO:0000318"/>
    <property type="project" value="GO_Central"/>
</dbReference>
<dbReference type="InterPro" id="IPR020475">
    <property type="entry name" value="Endothelin"/>
</dbReference>
<dbReference type="InterPro" id="IPR019764">
    <property type="entry name" value="Endothelin_toxin_CS"/>
</dbReference>
<dbReference type="InterPro" id="IPR001928">
    <property type="entry name" value="Endothln-like_toxin"/>
</dbReference>
<dbReference type="PANTHER" id="PTHR13874">
    <property type="entry name" value="ENDOTHELIN"/>
    <property type="match status" value="1"/>
</dbReference>
<dbReference type="PANTHER" id="PTHR13874:SF10">
    <property type="entry name" value="ENDOTHELIN-1"/>
    <property type="match status" value="1"/>
</dbReference>
<dbReference type="Pfam" id="PF00322">
    <property type="entry name" value="Endothelin"/>
    <property type="match status" value="1"/>
</dbReference>
<dbReference type="PRINTS" id="PR00365">
    <property type="entry name" value="ENDOTHELIN"/>
</dbReference>
<dbReference type="SMART" id="SM00272">
    <property type="entry name" value="END"/>
    <property type="match status" value="2"/>
</dbReference>
<dbReference type="PROSITE" id="PS00270">
    <property type="entry name" value="ENDOTHELIN"/>
    <property type="match status" value="2"/>
</dbReference>
<evidence type="ECO:0000250" key="1">
    <source>
        <dbReference type="UniProtKB" id="P05305"/>
    </source>
</evidence>
<evidence type="ECO:0000250" key="2">
    <source>
        <dbReference type="UniProtKB" id="P22387"/>
    </source>
</evidence>
<evidence type="ECO:0000250" key="3">
    <source>
        <dbReference type="UniProtKB" id="P22388"/>
    </source>
</evidence>
<evidence type="ECO:0000255" key="4"/>
<evidence type="ECO:0000256" key="5">
    <source>
        <dbReference type="SAM" id="MobiDB-lite"/>
    </source>
</evidence>
<evidence type="ECO:0000269" key="6">
    <source>
    </source>
</evidence>
<evidence type="ECO:0000269" key="7">
    <source>
    </source>
</evidence>
<evidence type="ECO:0000269" key="8">
    <source>
    </source>
</evidence>
<evidence type="ECO:0000305" key="9"/>
<organism>
    <name type="scientific">Sus scrofa</name>
    <name type="common">Pig</name>
    <dbReference type="NCBI Taxonomy" id="9823"/>
    <lineage>
        <taxon>Eukaryota</taxon>
        <taxon>Metazoa</taxon>
        <taxon>Chordata</taxon>
        <taxon>Craniata</taxon>
        <taxon>Vertebrata</taxon>
        <taxon>Euteleostomi</taxon>
        <taxon>Mammalia</taxon>
        <taxon>Eutheria</taxon>
        <taxon>Laurasiatheria</taxon>
        <taxon>Artiodactyla</taxon>
        <taxon>Suina</taxon>
        <taxon>Suidae</taxon>
        <taxon>Sus</taxon>
    </lineage>
</organism>
<keyword id="KW-0165">Cleavage on pair of basic residues</keyword>
<keyword id="KW-0903">Direct protein sequencing</keyword>
<keyword id="KW-1015">Disulfide bond</keyword>
<keyword id="KW-0325">Glycoprotein</keyword>
<keyword id="KW-1185">Reference proteome</keyword>
<keyword id="KW-0964">Secreted</keyword>
<keyword id="KW-0732">Signal</keyword>
<keyword id="KW-0838">Vasoactive</keyword>
<keyword id="KW-0839">Vasoconstrictor</keyword>
<sequence>MDYFPMIIALLFVAFQGAPETAVLGAELSPEAESQGETPSPHASWRPRRSKRCSCSSLMDKECVYFCHLDIIWVNTPEHIVPYGLGSPSRSRRSLKDLFPAKAADRRDRCQCASQKDKKCWSFCQAGKEIGRDQDTMEKRWDNQKKGTDCSKLGEKCIHRQLVMGRKIRRLEAISNSIKTSFHIAKLKAELYRDKKVTHNRTH</sequence>
<comment type="function">
    <text evidence="1 2 6">Endothelins are endothelium-derived vasoconstrictor peptides (PubMed:2451132). Probable ligand for G-protein coupled receptors EDNRA and EDNRB which activates PTK2B, BCAR1, BCAR3 and, GTPases RAP1 and RHOA cascade in glomerular mesangial cells (By similarity). Also binds the DEAR/FBXW7-AS1 receptor (By similarity). Promotes mesenteric arterial wall remodeling via activation of ROCK signaling and subsequent colocalization of NFATC3 with F-actin filaments (By similarity). NFATC3 then translocates to the nucleus where it subsequently promotes the transcription of the smooth muscle hypertrophy and differentiation marker ACTA2 (By similarity).</text>
</comment>
<comment type="subcellular location">
    <subcellularLocation>
        <location>Secreted</location>
    </subcellularLocation>
</comment>
<comment type="similarity">
    <text evidence="9">Belongs to the endothelin/sarafotoxin family.</text>
</comment>
<accession>P09558</accession>
<gene>
    <name type="primary">EDN1</name>
</gene>
<reference key="1">
    <citation type="journal article" date="1988" name="Nature">
        <title>A novel potent vasoconstrictor peptide produced by vascular endothelial cells.</title>
        <authorList>
            <person name="Yanagisawa M."/>
            <person name="Kurihara H."/>
            <person name="Kimura S."/>
            <person name="Tomobe Y."/>
            <person name="Kobayashi M."/>
            <person name="Mitsui Y."/>
            <person name="Yasaki Y."/>
            <person name="Goto K."/>
            <person name="Masaki T."/>
        </authorList>
    </citation>
    <scope>NUCLEOTIDE SEQUENCE [MRNA]</scope>
    <scope>PROTEIN SEQUENCE OF 53-73</scope>
    <scope>FUNCTION</scope>
    <scope>DISULFIDE BOND</scope>
    <source>
        <tissue>Endothelial cell</tissue>
    </source>
</reference>
<reference key="2">
    <citation type="journal article" date="1989" name="Biochem. Biophys. Res. Commun.">
        <title>Analysis of endothelin related peptides in culture supernatant of porcine aortic endothelial cells: evidence for biosynthetic pathway of endothelin-1.</title>
        <authorList>
            <person name="Sawamura T."/>
            <person name="Kimura S."/>
            <person name="Shinmi O."/>
            <person name="Sugita Y."/>
            <person name="Yanagisawa M."/>
            <person name="Masaki T."/>
        </authorList>
    </citation>
    <scope>PROTEIN SEQUENCE OF 53-82</scope>
    <source>
        <tissue>Endothelial cell</tissue>
    </source>
</reference>
<reference key="3">
    <citation type="journal article" date="1989" name="Biochem. Biophys. Res. Commun.">
        <title>Presence of endothelin-1 in porcine spinal cord: isolation and sequence determination.</title>
        <authorList>
            <person name="Shinmi O."/>
            <person name="Kimura S."/>
            <person name="Yoshizawa T."/>
            <person name="Sawamura T."/>
            <person name="Uchiyama Y."/>
            <person name="Sugita Y."/>
            <person name="Kanazawa I."/>
            <person name="Yanagisawa M."/>
            <person name="Goto K."/>
            <person name="Masaki T."/>
        </authorList>
    </citation>
    <scope>PROTEIN SEQUENCE OF 53-82</scope>
    <source>
        <tissue>Endothelial cell</tissue>
    </source>
</reference>
<reference key="4">
    <citation type="journal article" date="1990" name="Biochem. J.">
        <title>Mode of cleavage of pig big endothelin-1 by chymotrypsin. Production and degradation of mature endothelin-1.</title>
        <authorList>
            <person name="Takaoka M."/>
            <person name="Miyata Y."/>
            <person name="Takenobu Y."/>
            <person name="Ikegawa R."/>
            <person name="Matsumura Y."/>
            <person name="Morimoto S."/>
        </authorList>
    </citation>
    <scope>DEGRADATION BY CHYMOTRYPSIN</scope>
</reference>
<protein>
    <recommendedName>
        <fullName>Endothelin-1</fullName>
        <shortName>ET-1</shortName>
    </recommendedName>
    <alternativeName>
        <fullName>Preproendothelin-1</fullName>
        <shortName>PPET1</shortName>
    </alternativeName>
    <component>
        <recommendedName>
            <fullName>Big endothelin-1</fullName>
        </recommendedName>
    </component>
</protein>
<proteinExistence type="evidence at protein level"/>